<reference key="1">
    <citation type="journal article" date="2007" name="Cell">
        <title>Identification of the FANCI protein, a monoubiquitinated FANCD2 paralog required for DNA repair.</title>
        <authorList>
            <person name="Smogorzewska A."/>
            <person name="Matsuoka S."/>
            <person name="Vinciguerra P."/>
            <person name="McDonald E.R. III"/>
            <person name="Hurov K.E."/>
            <person name="Luo J."/>
            <person name="Ballif B.A."/>
            <person name="Gygi S.P."/>
            <person name="Hofmann K."/>
            <person name="D'Andrea A.D."/>
            <person name="Elledge S.J."/>
        </authorList>
    </citation>
    <scope>NUCLEOTIDE SEQUENCE [MRNA] (ISOFORM 3)</scope>
    <scope>FUNCTION</scope>
    <scope>UBIQUITINATION AT LYS-523</scope>
    <scope>PHOSPHORYLATION AT SER-730; THR-952 AND SER-1121</scope>
    <scope>SUBCELLULAR LOCATION</scope>
    <scope>INTERACTION WITH FANCD2</scope>
    <scope>VARIANTS FANCI LEU-55 AND GLN-1285</scope>
    <scope>CHARACTERIZATION OF VARIANTS FANCI LEU-55 AND GLN-1285</scope>
</reference>
<reference key="2">
    <citation type="journal article" date="2007" name="Nat. Struct. Mol. Biol.">
        <title>FANCI is a second monoubiquitinated member of the Fanconi anemia pathway.</title>
        <authorList>
            <person name="Sims A.E."/>
            <person name="Spiteri E."/>
            <person name="Sims R.J. III"/>
            <person name="Arita A.G."/>
            <person name="Lach F.P."/>
            <person name="Landers T."/>
            <person name="Wurm M."/>
            <person name="Freund M."/>
            <person name="Neveling K."/>
            <person name="Hanenberg H."/>
            <person name="Auerbach A.D."/>
            <person name="Huang T.T."/>
        </authorList>
    </citation>
    <scope>NUCLEOTIDE SEQUENCE [MRNA] (ISOFORM 3)</scope>
    <scope>FUNCTION</scope>
    <scope>UBIQUITINATION AT LYS-523</scope>
    <scope>SUBCELLULAR LOCATION</scope>
    <scope>INTERACTION WITH FANCD2</scope>
    <scope>VARIANT FANCI TYR-858</scope>
</reference>
<reference key="3">
    <citation type="journal article" date="2006" name="Nature">
        <title>Analysis of the DNA sequence and duplication history of human chromosome 15.</title>
        <authorList>
            <person name="Zody M.C."/>
            <person name="Garber M."/>
            <person name="Sharpe T."/>
            <person name="Young S.K."/>
            <person name="Rowen L."/>
            <person name="O'Neill K."/>
            <person name="Whittaker C.A."/>
            <person name="Kamal M."/>
            <person name="Chang J.L."/>
            <person name="Cuomo C.A."/>
            <person name="Dewar K."/>
            <person name="FitzGerald M.G."/>
            <person name="Kodira C.D."/>
            <person name="Madan A."/>
            <person name="Qin S."/>
            <person name="Yang X."/>
            <person name="Abbasi N."/>
            <person name="Abouelleil A."/>
            <person name="Arachchi H.M."/>
            <person name="Baradarani L."/>
            <person name="Birditt B."/>
            <person name="Bloom S."/>
            <person name="Bloom T."/>
            <person name="Borowsky M.L."/>
            <person name="Burke J."/>
            <person name="Butler J."/>
            <person name="Cook A."/>
            <person name="DeArellano K."/>
            <person name="DeCaprio D."/>
            <person name="Dorris L. III"/>
            <person name="Dors M."/>
            <person name="Eichler E.E."/>
            <person name="Engels R."/>
            <person name="Fahey J."/>
            <person name="Fleetwood P."/>
            <person name="Friedman C."/>
            <person name="Gearin G."/>
            <person name="Hall J.L."/>
            <person name="Hensley G."/>
            <person name="Johnson E."/>
            <person name="Jones C."/>
            <person name="Kamat A."/>
            <person name="Kaur A."/>
            <person name="Locke D.P."/>
            <person name="Madan A."/>
            <person name="Munson G."/>
            <person name="Jaffe D.B."/>
            <person name="Lui A."/>
            <person name="Macdonald P."/>
            <person name="Mauceli E."/>
            <person name="Naylor J.W."/>
            <person name="Nesbitt R."/>
            <person name="Nicol R."/>
            <person name="O'Leary S.B."/>
            <person name="Ratcliffe A."/>
            <person name="Rounsley S."/>
            <person name="She X."/>
            <person name="Sneddon K.M.B."/>
            <person name="Stewart S."/>
            <person name="Sougnez C."/>
            <person name="Stone S.M."/>
            <person name="Topham K."/>
            <person name="Vincent D."/>
            <person name="Wang S."/>
            <person name="Zimmer A.R."/>
            <person name="Birren B.W."/>
            <person name="Hood L."/>
            <person name="Lander E.S."/>
            <person name="Nusbaum C."/>
        </authorList>
    </citation>
    <scope>NUCLEOTIDE SEQUENCE [LARGE SCALE GENOMIC DNA]</scope>
</reference>
<reference key="4">
    <citation type="journal article" date="2004" name="Genome Res.">
        <title>The status, quality, and expansion of the NIH full-length cDNA project: the Mammalian Gene Collection (MGC).</title>
        <authorList>
            <consortium name="The MGC Project Team"/>
        </authorList>
    </citation>
    <scope>NUCLEOTIDE SEQUENCE [LARGE SCALE MRNA] (ISOFORMS 3 AND 4)</scope>
    <scope>VARIANT VAL-86</scope>
    <source>
        <tissue>Brain</tissue>
        <tissue>Skin</tissue>
    </source>
</reference>
<reference key="5">
    <citation type="journal article" date="2004" name="Nat. Genet.">
        <title>Complete sequencing and characterization of 21,243 full-length human cDNAs.</title>
        <authorList>
            <person name="Ota T."/>
            <person name="Suzuki Y."/>
            <person name="Nishikawa T."/>
            <person name="Otsuki T."/>
            <person name="Sugiyama T."/>
            <person name="Irie R."/>
            <person name="Wakamatsu A."/>
            <person name="Hayashi K."/>
            <person name="Sato H."/>
            <person name="Nagai K."/>
            <person name="Kimura K."/>
            <person name="Makita H."/>
            <person name="Sekine M."/>
            <person name="Obayashi M."/>
            <person name="Nishi T."/>
            <person name="Shibahara T."/>
            <person name="Tanaka T."/>
            <person name="Ishii S."/>
            <person name="Yamamoto J."/>
            <person name="Saito K."/>
            <person name="Kawai Y."/>
            <person name="Isono Y."/>
            <person name="Nakamura Y."/>
            <person name="Nagahari K."/>
            <person name="Murakami K."/>
            <person name="Yasuda T."/>
            <person name="Iwayanagi T."/>
            <person name="Wagatsuma M."/>
            <person name="Shiratori A."/>
            <person name="Sudo H."/>
            <person name="Hosoiri T."/>
            <person name="Kaku Y."/>
            <person name="Kodaira H."/>
            <person name="Kondo H."/>
            <person name="Sugawara M."/>
            <person name="Takahashi M."/>
            <person name="Kanda K."/>
            <person name="Yokoi T."/>
            <person name="Furuya T."/>
            <person name="Kikkawa E."/>
            <person name="Omura Y."/>
            <person name="Abe K."/>
            <person name="Kamihara K."/>
            <person name="Katsuta N."/>
            <person name="Sato K."/>
            <person name="Tanikawa M."/>
            <person name="Yamazaki M."/>
            <person name="Ninomiya K."/>
            <person name="Ishibashi T."/>
            <person name="Yamashita H."/>
            <person name="Murakawa K."/>
            <person name="Fujimori K."/>
            <person name="Tanai H."/>
            <person name="Kimata M."/>
            <person name="Watanabe M."/>
            <person name="Hiraoka S."/>
            <person name="Chiba Y."/>
            <person name="Ishida S."/>
            <person name="Ono Y."/>
            <person name="Takiguchi S."/>
            <person name="Watanabe S."/>
            <person name="Yosida M."/>
            <person name="Hotuta T."/>
            <person name="Kusano J."/>
            <person name="Kanehori K."/>
            <person name="Takahashi-Fujii A."/>
            <person name="Hara H."/>
            <person name="Tanase T.-O."/>
            <person name="Nomura Y."/>
            <person name="Togiya S."/>
            <person name="Komai F."/>
            <person name="Hara R."/>
            <person name="Takeuchi K."/>
            <person name="Arita M."/>
            <person name="Imose N."/>
            <person name="Musashino K."/>
            <person name="Yuuki H."/>
            <person name="Oshima A."/>
            <person name="Sasaki N."/>
            <person name="Aotsuka S."/>
            <person name="Yoshikawa Y."/>
            <person name="Matsunawa H."/>
            <person name="Ichihara T."/>
            <person name="Shiohata N."/>
            <person name="Sano S."/>
            <person name="Moriya S."/>
            <person name="Momiyama H."/>
            <person name="Satoh N."/>
            <person name="Takami S."/>
            <person name="Terashima Y."/>
            <person name="Suzuki O."/>
            <person name="Nakagawa S."/>
            <person name="Senoh A."/>
            <person name="Mizoguchi H."/>
            <person name="Goto Y."/>
            <person name="Shimizu F."/>
            <person name="Wakebe H."/>
            <person name="Hishigaki H."/>
            <person name="Watanabe T."/>
            <person name="Sugiyama A."/>
            <person name="Takemoto M."/>
            <person name="Kawakami B."/>
            <person name="Yamazaki M."/>
            <person name="Watanabe K."/>
            <person name="Kumagai A."/>
            <person name="Itakura S."/>
            <person name="Fukuzumi Y."/>
            <person name="Fujimori Y."/>
            <person name="Komiyama M."/>
            <person name="Tashiro H."/>
            <person name="Tanigami A."/>
            <person name="Fujiwara T."/>
            <person name="Ono T."/>
            <person name="Yamada K."/>
            <person name="Fujii Y."/>
            <person name="Ozaki K."/>
            <person name="Hirao M."/>
            <person name="Ohmori Y."/>
            <person name="Kawabata A."/>
            <person name="Hikiji T."/>
            <person name="Kobatake N."/>
            <person name="Inagaki H."/>
            <person name="Ikema Y."/>
            <person name="Okamoto S."/>
            <person name="Okitani R."/>
            <person name="Kawakami T."/>
            <person name="Noguchi S."/>
            <person name="Itoh T."/>
            <person name="Shigeta K."/>
            <person name="Senba T."/>
            <person name="Matsumura K."/>
            <person name="Nakajima Y."/>
            <person name="Mizuno T."/>
            <person name="Morinaga M."/>
            <person name="Sasaki M."/>
            <person name="Togashi T."/>
            <person name="Oyama M."/>
            <person name="Hata H."/>
            <person name="Watanabe M."/>
            <person name="Komatsu T."/>
            <person name="Mizushima-Sugano J."/>
            <person name="Satoh T."/>
            <person name="Shirai Y."/>
            <person name="Takahashi Y."/>
            <person name="Nakagawa K."/>
            <person name="Okumura K."/>
            <person name="Nagase T."/>
            <person name="Nomura N."/>
            <person name="Kikuchi H."/>
            <person name="Masuho Y."/>
            <person name="Yamashita R."/>
            <person name="Nakai K."/>
            <person name="Yada T."/>
            <person name="Nakamura Y."/>
            <person name="Ohara O."/>
            <person name="Isogai T."/>
            <person name="Sugano S."/>
        </authorList>
    </citation>
    <scope>NUCLEOTIDE SEQUENCE [LARGE SCALE MRNA] OF 175-1324 (ISOFORM 2)</scope>
    <scope>NUCLEOTIDE SEQUENCE [LARGE SCALE MRNA] OF 342-1328 (ISOFORM 1)</scope>
    <scope>VARIANT SER-742</scope>
    <source>
        <tissue>Teratocarcinoma</tissue>
    </source>
</reference>
<reference key="6">
    <citation type="journal article" date="2001" name="DNA Res.">
        <title>Prediction of the coding sequences of unidentified human genes. XX. The complete sequences of 100 new cDNA clones from brain which code for large proteins in vitro.</title>
        <authorList>
            <person name="Nagase T."/>
            <person name="Nakayama M."/>
            <person name="Nakajima D."/>
            <person name="Kikuno R."/>
            <person name="Ohara O."/>
        </authorList>
    </citation>
    <scope>NUCLEOTIDE SEQUENCE [LARGE SCALE MRNA] OF 527-1328 (ISOFORM 3)</scope>
    <scope>VARIANT SER-742</scope>
    <source>
        <tissue>Brain</tissue>
    </source>
</reference>
<reference key="7">
    <citation type="submission" date="2005-06" db="UniProtKB">
        <authorList>
            <person name="Bienvenut W.V."/>
        </authorList>
    </citation>
    <scope>PROTEIN SEQUENCE OF 438-447; 781-788; 809-819; 885-897; 965-994 AND 1079-1094</scope>
    <scope>IDENTIFICATION BY MASS SPECTROMETRY</scope>
    <source>
        <tissue>B-cell lymphoma</tissue>
    </source>
</reference>
<reference key="8">
    <citation type="journal article" date="2006" name="Nat. Biotechnol.">
        <title>A probability-based approach for high-throughput protein phosphorylation analysis and site localization.</title>
        <authorList>
            <person name="Beausoleil S.A."/>
            <person name="Villen J."/>
            <person name="Gerber S.A."/>
            <person name="Rush J."/>
            <person name="Gygi S.P."/>
        </authorList>
    </citation>
    <scope>PHOSPHORYLATION [LARGE SCALE ANALYSIS] AT SER-407</scope>
    <scope>IDENTIFICATION BY MASS SPECTROMETRY [LARGE SCALE ANALYSIS]</scope>
    <source>
        <tissue>Cervix carcinoma</tissue>
    </source>
</reference>
<reference key="9">
    <citation type="journal article" date="2007" name="Cell. Oncol.">
        <title>Identification of the Fanconi anemia complementation group I gene, FANCI.</title>
        <authorList>
            <person name="Dorsman J.C."/>
            <person name="Levitus M."/>
            <person name="Rockx D."/>
            <person name="Rooimans M.A."/>
            <person name="Oostra A.B."/>
            <person name="Haitjema A."/>
            <person name="Bakker S.T."/>
            <person name="Steltenpool J."/>
            <person name="Schuler D."/>
            <person name="Mohan S."/>
            <person name="Schindler D."/>
            <person name="Arwert F."/>
            <person name="Pals G."/>
            <person name="Mathew C.G."/>
            <person name="Waisfisz Q."/>
            <person name="de Winter J.P."/>
            <person name="Joenje H."/>
        </authorList>
    </citation>
    <scope>FUNCTION</scope>
    <scope>VARIANT FANCI GLN-1285</scope>
    <scope>VARIANT LEU-55</scope>
</reference>
<reference key="10">
    <citation type="journal article" date="2007" name="Science">
        <title>ATM and ATR substrate analysis reveals extensive protein networks responsive to DNA damage.</title>
        <authorList>
            <person name="Matsuoka S."/>
            <person name="Ballif B.A."/>
            <person name="Smogorzewska A."/>
            <person name="McDonald E.R. III"/>
            <person name="Hurov K.E."/>
            <person name="Luo J."/>
            <person name="Bakalarski C.E."/>
            <person name="Zhao Z."/>
            <person name="Solimini N."/>
            <person name="Lerenthal Y."/>
            <person name="Shiloh Y."/>
            <person name="Gygi S.P."/>
            <person name="Elledge S.J."/>
        </authorList>
    </citation>
    <scope>IDENTIFICATION BY MASS SPECTROMETRY [LARGE SCALE ANALYSIS]</scope>
    <source>
        <tissue>Embryonic kidney</tissue>
    </source>
</reference>
<reference key="11">
    <citation type="journal article" date="2008" name="J. Cell Sci.">
        <title>EML3 is a nuclear microtubule-binding protein required for the correct alignment of chromosomes in metaphase.</title>
        <authorList>
            <person name="Tegha-Dunghu J."/>
            <person name="Neumann B."/>
            <person name="Reber S."/>
            <person name="Krause R."/>
            <person name="Erfle H."/>
            <person name="Walter T."/>
            <person name="Held M."/>
            <person name="Rogers P."/>
            <person name="Hupfeld K."/>
            <person name="Ruppert T."/>
            <person name="Ellenberg J."/>
            <person name="Gruss O.J."/>
        </authorList>
    </citation>
    <scope>SUBCELLULAR LOCATION</scope>
</reference>
<reference key="12">
    <citation type="journal article" date="2008" name="Mol. Cell">
        <title>Kinase-selective enrichment enables quantitative phosphoproteomics of the kinome across the cell cycle.</title>
        <authorList>
            <person name="Daub H."/>
            <person name="Olsen J.V."/>
            <person name="Bairlein M."/>
            <person name="Gnad F."/>
            <person name="Oppermann F.S."/>
            <person name="Korner R."/>
            <person name="Greff Z."/>
            <person name="Keri G."/>
            <person name="Stemmann O."/>
            <person name="Mann M."/>
        </authorList>
    </citation>
    <scope>IDENTIFICATION BY MASS SPECTROMETRY [LARGE SCALE ANALYSIS]</scope>
    <source>
        <tissue>Cervix carcinoma</tissue>
    </source>
</reference>
<reference key="13">
    <citation type="journal article" date="2008" name="Mol. Cell">
        <title>Mechanistic insight into site-restricted monoubiquitination of FANCD2 by Ube2t, FANCL, and FANCI.</title>
        <authorList>
            <person name="Alpi A.F."/>
            <person name="Pace P.E."/>
            <person name="Babu M.M."/>
            <person name="Patel K.J."/>
        </authorList>
    </citation>
    <scope>FUNCTION</scope>
</reference>
<reference key="14">
    <citation type="journal article" date="2008" name="Proc. Natl. Acad. Sci. U.S.A.">
        <title>A quantitative atlas of mitotic phosphorylation.</title>
        <authorList>
            <person name="Dephoure N."/>
            <person name="Zhou C."/>
            <person name="Villen J."/>
            <person name="Beausoleil S.A."/>
            <person name="Bakalarski C.E."/>
            <person name="Elledge S.J."/>
            <person name="Gygi S.P."/>
        </authorList>
    </citation>
    <scope>PHOSPHORYLATION [LARGE SCALE ANALYSIS] AT SER-407</scope>
    <scope>IDENTIFICATION BY MASS SPECTROMETRY [LARGE SCALE ANALYSIS]</scope>
    <source>
        <tissue>Cervix carcinoma</tissue>
    </source>
</reference>
<reference key="15">
    <citation type="journal article" date="2009" name="J. Biol. Chem.">
        <title>FANCI binds branched DNA and is monoubiquitinated by UBE2T-FANCL.</title>
        <authorList>
            <person name="Longerich S."/>
            <person name="San Filippo J."/>
            <person name="Liu D."/>
            <person name="Sung P."/>
        </authorList>
    </citation>
    <scope>FUNCTION</scope>
    <scope>DNA-BINDING</scope>
    <scope>UBIQUITINATION AT LYS-523</scope>
    <scope>MUTAGENESIS OF LYS-523</scope>
</reference>
<reference key="16">
    <citation type="journal article" date="2009" name="Nat. Cell Biol.">
        <title>Replication stress induces sister-chromatid bridging at fragile site loci in mitosis.</title>
        <authorList>
            <person name="Chan K.L."/>
            <person name="Palmai-Pallag T."/>
            <person name="Ying S."/>
            <person name="Hickson I.D."/>
        </authorList>
    </citation>
    <scope>SUBCELLULAR LOCATION</scope>
</reference>
<reference key="17">
    <citation type="journal article" date="2010" name="Cell">
        <title>Identification of KIAA1018/FAN1, a DNA repair nuclease recruited to DNA damage by monoubiquitinated FANCD2.</title>
        <authorList>
            <person name="MacKay C."/>
            <person name="Declais A.C."/>
            <person name="Lundin C."/>
            <person name="Agostinho A."/>
            <person name="Deans A.J."/>
            <person name="MacArtney T.J."/>
            <person name="Hofmann K."/>
            <person name="Gartner A."/>
            <person name="West S.C."/>
            <person name="Helleday T."/>
            <person name="Lilley D.M."/>
            <person name="Rouse J."/>
        </authorList>
    </citation>
    <scope>INTERACTION WITH MTMR15</scope>
</reference>
<reference key="18">
    <citation type="journal article" date="2010" name="Mol. Cell. Biol.">
        <title>DNA polymerase POLN participates in cross-link repair and homologous recombination.</title>
        <authorList>
            <person name="Moldovan G.L."/>
            <person name="Madhavan M.V."/>
            <person name="Mirchandani K.D."/>
            <person name="McCaffrey R.M."/>
            <person name="Vinciguerra P."/>
            <person name="D'Andrea A.D."/>
        </authorList>
    </citation>
    <scope>INTERACTION WITH POLN</scope>
</reference>
<reference key="19">
    <citation type="journal article" date="2010" name="Sci. Signal.">
        <title>Quantitative phosphoproteomics reveals widespread full phosphorylation site occupancy during mitosis.</title>
        <authorList>
            <person name="Olsen J.V."/>
            <person name="Vermeulen M."/>
            <person name="Santamaria A."/>
            <person name="Kumar C."/>
            <person name="Miller M.L."/>
            <person name="Jensen L.J."/>
            <person name="Gnad F."/>
            <person name="Cox J."/>
            <person name="Jensen T.S."/>
            <person name="Nigg E.A."/>
            <person name="Brunak S."/>
            <person name="Mann M."/>
        </authorList>
    </citation>
    <scope>IDENTIFICATION BY MASS SPECTROMETRY [LARGE SCALE ANALYSIS]</scope>
    <source>
        <tissue>Cervix carcinoma</tissue>
    </source>
</reference>
<reference key="20">
    <citation type="journal article" date="2011" name="BMC Syst. Biol.">
        <title>Initial characterization of the human central proteome.</title>
        <authorList>
            <person name="Burkard T.R."/>
            <person name="Planyavsky M."/>
            <person name="Kaupe I."/>
            <person name="Breitwieser F.P."/>
            <person name="Buerckstuemmer T."/>
            <person name="Bennett K.L."/>
            <person name="Superti-Furga G."/>
            <person name="Colinge J."/>
        </authorList>
    </citation>
    <scope>IDENTIFICATION BY MASS SPECTROMETRY [LARGE SCALE ANALYSIS]</scope>
</reference>
<reference key="21">
    <citation type="journal article" date="2011" name="J. Biol. Chem.">
        <title>Structural analysis of human FANCL, the E3 ligase in the Fanconi anemia pathway.</title>
        <authorList>
            <person name="Hodson C."/>
            <person name="Cole A.R."/>
            <person name="Lewis L.P."/>
            <person name="Miles J.A."/>
            <person name="Purkiss A."/>
            <person name="Walden H."/>
        </authorList>
    </citation>
    <scope>INTERACTION WITH FANCL</scope>
</reference>
<reference key="22">
    <citation type="journal article" date="2013" name="J. Proteome Res.">
        <title>Toward a comprehensive characterization of a human cancer cell phosphoproteome.</title>
        <authorList>
            <person name="Zhou H."/>
            <person name="Di Palma S."/>
            <person name="Preisinger C."/>
            <person name="Peng M."/>
            <person name="Polat A.N."/>
            <person name="Heck A.J."/>
            <person name="Mohammed S."/>
        </authorList>
    </citation>
    <scope>PHOSPHORYLATION [LARGE SCALE ANALYSIS] AT SER-407</scope>
    <scope>IDENTIFICATION BY MASS SPECTROMETRY [LARGE SCALE ANALYSIS]</scope>
    <source>
        <tissue>Cervix carcinoma</tissue>
        <tissue>Erythroleukemia</tissue>
    </source>
</reference>
<reference key="23">
    <citation type="journal article" date="2015" name="EMBO J.">
        <title>Ubiquitin-like protein UBL5 promotes the functional integrity of the Fanconi anemia pathway.</title>
        <authorList>
            <person name="Oka Y."/>
            <person name="Bekker-Jensen S."/>
            <person name="Mailand N."/>
        </authorList>
    </citation>
    <scope>FUNCTION</scope>
    <scope>INTERACTION WITH UBL5</scope>
    <scope>SUBUNIT</scope>
</reference>
<reference evidence="22" key="24">
    <citation type="journal article" date="2023" name="EMBO J.">
        <title>Structural and biochemical basis of interdependent FANCI-FANCD2 ubiquitination.</title>
        <authorList>
            <person name="Lemonidis K."/>
            <person name="Rennie M.L."/>
            <person name="Arkinson C."/>
            <person name="Chaugule V.K."/>
            <person name="Clarke M."/>
            <person name="Streetley J."/>
            <person name="Walden H."/>
        </authorList>
    </citation>
    <scope>STRUCTURE BY ELECTRON MICROSCOPY (4.14 ANGSTROMS)</scope>
    <scope>FUNCTION</scope>
    <scope>INTERACTION WITH FANCD2</scope>
    <scope>UBIQUITINATION AT LYS-523</scope>
    <scope>DEUBIQUITINATION BY USP1</scope>
</reference>
<organism>
    <name type="scientific">Homo sapiens</name>
    <name type="common">Human</name>
    <dbReference type="NCBI Taxonomy" id="9606"/>
    <lineage>
        <taxon>Eukaryota</taxon>
        <taxon>Metazoa</taxon>
        <taxon>Chordata</taxon>
        <taxon>Craniata</taxon>
        <taxon>Vertebrata</taxon>
        <taxon>Euteleostomi</taxon>
        <taxon>Mammalia</taxon>
        <taxon>Eutheria</taxon>
        <taxon>Euarchontoglires</taxon>
        <taxon>Primates</taxon>
        <taxon>Haplorrhini</taxon>
        <taxon>Catarrhini</taxon>
        <taxon>Hominidae</taxon>
        <taxon>Homo</taxon>
    </lineage>
</organism>
<sequence>MDQKILSLAAEKTADKLQEFLQTLREGDLTNLLQNQAVKGKVAGALLRAIFKGSPCSEEAGTLRRRKIYTCCIQLVESGDLQKEIASEIIGLLMLEAHHFPGPLLVELANEFISAVREGSLVNGKSLELLPIILTALATKKENLAYGKGVLSGEECKKQLINTLCSGRWDQQYVIQLTSMFKDVPLTAEEVEFVVEKALSMFSKMNLQEIPPLVYQLLVLSSKGSRKSVLEGIIAFFSALDKQHNEEQSGDELLDVVTVPSGELRHVEGTIILHIVFAIKLDYELGRELVKHLKVGQQGDSNNNLSPFSIALLLSVTRIQRFQDQVLDLLKTSVVKSFKDLQLLQGSKFLQNLVPHRSYVSTMILEVVKNSVHSWDHVTQGLVELGFILMDSYGPKKVLDGKTIETSPSLSRMPNQHACKLGANILLETFKIHEMIRQEILEQVLNRVVTRASSPISHFLDLLSNIVMYAPLVLQSCSSKVTEAFDYLSFLPLQTVQRLLKAVQPLLKVSMSMRDCLILVLRKAMFANQLDARKSAVAGFLLLLKNFKVLGSLSSSQCSQSLSVSQVHVDVHSHYNSVANETFCLEIMDSLRRCLSQQADVRLMLYEGFYDVLRRNSQLANSVMQTLLSQLKQFYEPKPDLLPPLKLEACILTQGDKISLQEPLDYLLCCIQHCLAWYKNTVIPLQQGEEEEEEEEAFYEDLDDILESITNRMIKSELEDFELDKSADFSQSTSIGIKNNICAFLVMGVCEVLIEYNFSISSFSKNRFEDILSLFMCYKKLSDILNEKAGKAKTKMANKTSDSLLSMKFVSSLLTALFRDSIQSHQESLSVLRSSNEFMRYAVNVALQKVQQLKETGHVSGPDGQNPEKIFQNLCDITRVLLWRYTSIPTSVEESGKKEKGKSISLLCLEGLQKIFSAVQQFYQPKIQQFLRALDVTDKEGEEREDADVSVTQRTAFQIRQFQRSLLNLLSSQEEDFNSKEALLLVTVLTSLSKLLEPSSPQFVQMLSWTSKICKENSREDALFCKSLMNLLFSLHVSYKSPVILLRDLSQDIHGHLGDIDQDVEVEKTNHFAIVNLRTAAPTVCLLVLSQAEKVLEEVDWLITKLKGQVSQETLSEEASSQATLPNQPVEKAIIMQLGTLLTFFHELVQTALPSGSCVDTLLKDLCKMYTTLTALVRYYLQVCQSSGGIPKNMEKLVKLSGSHLTPLCYSFISYVQNKSKSLNYTGEKKEKPAAVATAMARVLRETKPIPNLIFAIEQYEKFLIHLSKKSKVNLMQHMKLSTSRDFKIKGNILDMVLREDGEDENEEGTASEHGGQNKEPAKKKRKK</sequence>
<accession>Q9NVI1</accession>
<accession>A4ZVE4</accession>
<accession>A5YMH4</accession>
<accession>A6NJZ0</accession>
<accession>Q96JN1</accession>
<accession>Q96ST0</accession>
<accession>Q9BT96</accession>
<protein>
    <recommendedName>
        <fullName>Fanconi anemia group I protein</fullName>
        <shortName>Protein FACI</shortName>
    </recommendedName>
</protein>
<evidence type="ECO:0000250" key="1">
    <source>
        <dbReference type="UniProtKB" id="B0I564"/>
    </source>
</evidence>
<evidence type="ECO:0000250" key="2">
    <source>
        <dbReference type="UniProtKB" id="Q8K368"/>
    </source>
</evidence>
<evidence type="ECO:0000256" key="3">
    <source>
        <dbReference type="SAM" id="MobiDB-lite"/>
    </source>
</evidence>
<evidence type="ECO:0000269" key="4">
    <source>
    </source>
</evidence>
<evidence type="ECO:0000269" key="5">
    <source>
    </source>
</evidence>
<evidence type="ECO:0000269" key="6">
    <source>
    </source>
</evidence>
<evidence type="ECO:0000269" key="7">
    <source>
    </source>
</evidence>
<evidence type="ECO:0000269" key="8">
    <source>
    </source>
</evidence>
<evidence type="ECO:0000269" key="9">
    <source>
    </source>
</evidence>
<evidence type="ECO:0000269" key="10">
    <source>
    </source>
</evidence>
<evidence type="ECO:0000269" key="11">
    <source>
    </source>
</evidence>
<evidence type="ECO:0000269" key="12">
    <source>
    </source>
</evidence>
<evidence type="ECO:0000269" key="13">
    <source>
    </source>
</evidence>
<evidence type="ECO:0000269" key="14">
    <source>
    </source>
</evidence>
<evidence type="ECO:0000269" key="15">
    <source>
    </source>
</evidence>
<evidence type="ECO:0000269" key="16">
    <source>
    </source>
</evidence>
<evidence type="ECO:0000269" key="17">
    <source>
    </source>
</evidence>
<evidence type="ECO:0000269" key="18">
    <source>
    </source>
</evidence>
<evidence type="ECO:0000303" key="19">
    <source>
    </source>
</evidence>
<evidence type="ECO:0000303" key="20">
    <source>
    </source>
</evidence>
<evidence type="ECO:0000305" key="21"/>
<evidence type="ECO:0007744" key="22">
    <source>
        <dbReference type="PDB" id="7ZF1"/>
    </source>
</evidence>
<evidence type="ECO:0007744" key="23">
    <source>
    </source>
</evidence>
<evidence type="ECO:0007744" key="24">
    <source>
    </source>
</evidence>
<evidence type="ECO:0007744" key="25">
    <source>
    </source>
</evidence>
<evidence type="ECO:0007829" key="26">
    <source>
        <dbReference type="PDB" id="6VAA"/>
    </source>
</evidence>
<evidence type="ECO:0007829" key="27">
    <source>
        <dbReference type="PDB" id="6VAD"/>
    </source>
</evidence>
<evidence type="ECO:0007829" key="28">
    <source>
        <dbReference type="PDB" id="8A9J"/>
    </source>
</evidence>
<evidence type="ECO:0007829" key="29">
    <source>
        <dbReference type="PDB" id="8A9K"/>
    </source>
</evidence>
<dbReference type="EMBL" id="EF469766">
    <property type="protein sequence ID" value="ABP88002.1"/>
    <property type="molecule type" value="mRNA"/>
</dbReference>
<dbReference type="EMBL" id="EF567077">
    <property type="protein sequence ID" value="ABQ63084.1"/>
    <property type="molecule type" value="mRNA"/>
</dbReference>
<dbReference type="EMBL" id="AC124068">
    <property type="status" value="NOT_ANNOTATED_CDS"/>
    <property type="molecule type" value="Genomic_DNA"/>
</dbReference>
<dbReference type="EMBL" id="BC004277">
    <property type="protein sequence ID" value="AAH04277.1"/>
    <property type="status" value="ALT_INIT"/>
    <property type="molecule type" value="mRNA"/>
</dbReference>
<dbReference type="EMBL" id="BC140769">
    <property type="protein sequence ID" value="AAI40770.1"/>
    <property type="molecule type" value="mRNA"/>
</dbReference>
<dbReference type="EMBL" id="AK001581">
    <property type="protein sequence ID" value="BAA91770.1"/>
    <property type="status" value="ALT_INIT"/>
    <property type="molecule type" value="mRNA"/>
</dbReference>
<dbReference type="EMBL" id="AK027564">
    <property type="protein sequence ID" value="BAB55200.1"/>
    <property type="status" value="ALT_INIT"/>
    <property type="molecule type" value="mRNA"/>
</dbReference>
<dbReference type="EMBL" id="AB058697">
    <property type="protein sequence ID" value="BAB47423.1"/>
    <property type="molecule type" value="mRNA"/>
</dbReference>
<dbReference type="CCDS" id="CCDS10349.2">
    <molecule id="Q9NVI1-1"/>
</dbReference>
<dbReference type="CCDS" id="CCDS45346.1">
    <molecule id="Q9NVI1-3"/>
</dbReference>
<dbReference type="RefSeq" id="NP_001106849.1">
    <molecule id="Q9NVI1-3"/>
    <property type="nucleotide sequence ID" value="NM_001113378.2"/>
</dbReference>
<dbReference type="RefSeq" id="NP_001363840.1">
    <molecule id="Q9NVI1-3"/>
    <property type="nucleotide sequence ID" value="NM_001376911.1"/>
</dbReference>
<dbReference type="RefSeq" id="NP_060663.2">
    <molecule id="Q9NVI1-1"/>
    <property type="nucleotide sequence ID" value="NM_018193.3"/>
</dbReference>
<dbReference type="RefSeq" id="XP_011520058.1">
    <molecule id="Q9NVI1-3"/>
    <property type="nucleotide sequence ID" value="XM_011521756.3"/>
</dbReference>
<dbReference type="RefSeq" id="XP_011520059.1">
    <property type="nucleotide sequence ID" value="XM_011521757.2"/>
</dbReference>
<dbReference type="RefSeq" id="XP_011520066.1">
    <molecule id="Q9NVI1-1"/>
    <property type="nucleotide sequence ID" value="XM_011521764.3"/>
</dbReference>
<dbReference type="RefSeq" id="XP_047288745.1">
    <molecule id="Q9NVI1-3"/>
    <property type="nucleotide sequence ID" value="XM_047432789.1"/>
</dbReference>
<dbReference type="RefSeq" id="XP_047288746.1">
    <molecule id="Q9NVI1-3"/>
    <property type="nucleotide sequence ID" value="XM_047432790.1"/>
</dbReference>
<dbReference type="RefSeq" id="XP_047288747.1">
    <molecule id="Q9NVI1-3"/>
    <property type="nucleotide sequence ID" value="XM_047432791.1"/>
</dbReference>
<dbReference type="RefSeq" id="XP_047288748.1">
    <molecule id="Q9NVI1-3"/>
    <property type="nucleotide sequence ID" value="XM_047432792.1"/>
</dbReference>
<dbReference type="RefSeq" id="XP_047288749.1">
    <molecule id="Q9NVI1-3"/>
    <property type="nucleotide sequence ID" value="XM_047432793.1"/>
</dbReference>
<dbReference type="RefSeq" id="XP_047288750.1">
    <molecule id="Q9NVI1-3"/>
    <property type="nucleotide sequence ID" value="XM_047432794.1"/>
</dbReference>
<dbReference type="RefSeq" id="XP_047288751.1">
    <molecule id="Q9NVI1-3"/>
    <property type="nucleotide sequence ID" value="XM_047432795.1"/>
</dbReference>
<dbReference type="RefSeq" id="XP_047288752.1">
    <molecule id="Q9NVI1-3"/>
    <property type="nucleotide sequence ID" value="XM_047432796.1"/>
</dbReference>
<dbReference type="RefSeq" id="XP_047288753.1">
    <molecule id="Q9NVI1-3"/>
    <property type="nucleotide sequence ID" value="XM_047432797.1"/>
</dbReference>
<dbReference type="RefSeq" id="XP_047288754.1">
    <molecule id="Q9NVI1-3"/>
    <property type="nucleotide sequence ID" value="XM_047432798.1"/>
</dbReference>
<dbReference type="RefSeq" id="XP_047288755.1">
    <molecule id="Q9NVI1-3"/>
    <property type="nucleotide sequence ID" value="XM_047432799.1"/>
</dbReference>
<dbReference type="RefSeq" id="XP_047288756.1">
    <molecule id="Q9NVI1-3"/>
    <property type="nucleotide sequence ID" value="XM_047432800.1"/>
</dbReference>
<dbReference type="RefSeq" id="XP_047288757.1">
    <molecule id="Q9NVI1-3"/>
    <property type="nucleotide sequence ID" value="XM_047432801.1"/>
</dbReference>
<dbReference type="RefSeq" id="XP_047288769.1">
    <molecule id="Q9NVI1-1"/>
    <property type="nucleotide sequence ID" value="XM_047432813.1"/>
</dbReference>
<dbReference type="RefSeq" id="XP_047288770.1">
    <molecule id="Q9NVI1-1"/>
    <property type="nucleotide sequence ID" value="XM_047432814.1"/>
</dbReference>
<dbReference type="RefSeq" id="XP_047288771.1">
    <molecule id="Q9NVI1-1"/>
    <property type="nucleotide sequence ID" value="XM_047432815.1"/>
</dbReference>
<dbReference type="RefSeq" id="XP_047288772.1">
    <molecule id="Q9NVI1-1"/>
    <property type="nucleotide sequence ID" value="XM_047432816.1"/>
</dbReference>
<dbReference type="RefSeq" id="XP_047288773.1">
    <molecule id="Q9NVI1-1"/>
    <property type="nucleotide sequence ID" value="XM_047432817.1"/>
</dbReference>
<dbReference type="RefSeq" id="XP_047288774.1">
    <molecule id="Q9NVI1-1"/>
    <property type="nucleotide sequence ID" value="XM_047432818.1"/>
</dbReference>
<dbReference type="RefSeq" id="XP_047288775.1">
    <molecule id="Q9NVI1-1"/>
    <property type="nucleotide sequence ID" value="XM_047432819.1"/>
</dbReference>
<dbReference type="RefSeq" id="XP_047288776.1">
    <molecule id="Q9NVI1-1"/>
    <property type="nucleotide sequence ID" value="XM_047432820.1"/>
</dbReference>
<dbReference type="RefSeq" id="XP_047288777.1">
    <molecule id="Q9NVI1-1"/>
    <property type="nucleotide sequence ID" value="XM_047432821.1"/>
</dbReference>
<dbReference type="RefSeq" id="XP_047288778.1">
    <molecule id="Q9NVI1-1"/>
    <property type="nucleotide sequence ID" value="XM_047432822.1"/>
</dbReference>
<dbReference type="RefSeq" id="XP_054234344.1">
    <molecule id="Q9NVI1-3"/>
    <property type="nucleotide sequence ID" value="XM_054378369.1"/>
</dbReference>
<dbReference type="RefSeq" id="XP_054234345.1">
    <molecule id="Q9NVI1-3"/>
    <property type="nucleotide sequence ID" value="XM_054378370.1"/>
</dbReference>
<dbReference type="RefSeq" id="XP_054234346.1">
    <molecule id="Q9NVI1-3"/>
    <property type="nucleotide sequence ID" value="XM_054378371.1"/>
</dbReference>
<dbReference type="RefSeq" id="XP_054234347.1">
    <molecule id="Q9NVI1-3"/>
    <property type="nucleotide sequence ID" value="XM_054378372.1"/>
</dbReference>
<dbReference type="RefSeq" id="XP_054234348.1">
    <molecule id="Q9NVI1-3"/>
    <property type="nucleotide sequence ID" value="XM_054378373.1"/>
</dbReference>
<dbReference type="RefSeq" id="XP_054234349.1">
    <molecule id="Q9NVI1-3"/>
    <property type="nucleotide sequence ID" value="XM_054378374.1"/>
</dbReference>
<dbReference type="RefSeq" id="XP_054234350.1">
    <molecule id="Q9NVI1-3"/>
    <property type="nucleotide sequence ID" value="XM_054378375.1"/>
</dbReference>
<dbReference type="RefSeq" id="XP_054234351.1">
    <molecule id="Q9NVI1-3"/>
    <property type="nucleotide sequence ID" value="XM_054378376.1"/>
</dbReference>
<dbReference type="RefSeq" id="XP_054234352.1">
    <molecule id="Q9NVI1-3"/>
    <property type="nucleotide sequence ID" value="XM_054378377.1"/>
</dbReference>
<dbReference type="RefSeq" id="XP_054234353.1">
    <molecule id="Q9NVI1-3"/>
    <property type="nucleotide sequence ID" value="XM_054378378.1"/>
</dbReference>
<dbReference type="RefSeq" id="XP_054234354.1">
    <molecule id="Q9NVI1-3"/>
    <property type="nucleotide sequence ID" value="XM_054378379.1"/>
</dbReference>
<dbReference type="RefSeq" id="XP_054234355.1">
    <molecule id="Q9NVI1-3"/>
    <property type="nucleotide sequence ID" value="XM_054378380.1"/>
</dbReference>
<dbReference type="RefSeq" id="XP_054234356.1">
    <molecule id="Q9NVI1-3"/>
    <property type="nucleotide sequence ID" value="XM_054378381.1"/>
</dbReference>
<dbReference type="RefSeq" id="XP_054234357.1">
    <molecule id="Q9NVI1-3"/>
    <property type="nucleotide sequence ID" value="XM_054378382.1"/>
</dbReference>
<dbReference type="RefSeq" id="XP_054234369.1">
    <molecule id="Q9NVI1-1"/>
    <property type="nucleotide sequence ID" value="XM_054378394.1"/>
</dbReference>
<dbReference type="RefSeq" id="XP_054234370.1">
    <molecule id="Q9NVI1-1"/>
    <property type="nucleotide sequence ID" value="XM_054378395.1"/>
</dbReference>
<dbReference type="RefSeq" id="XP_054234371.1">
    <molecule id="Q9NVI1-1"/>
    <property type="nucleotide sequence ID" value="XM_054378396.1"/>
</dbReference>
<dbReference type="RefSeq" id="XP_054234372.1">
    <molecule id="Q9NVI1-1"/>
    <property type="nucleotide sequence ID" value="XM_054378397.1"/>
</dbReference>
<dbReference type="RefSeq" id="XP_054234373.1">
    <molecule id="Q9NVI1-1"/>
    <property type="nucleotide sequence ID" value="XM_054378398.1"/>
</dbReference>
<dbReference type="RefSeq" id="XP_054234374.1">
    <molecule id="Q9NVI1-1"/>
    <property type="nucleotide sequence ID" value="XM_054378399.1"/>
</dbReference>
<dbReference type="RefSeq" id="XP_054234375.1">
    <molecule id="Q9NVI1-1"/>
    <property type="nucleotide sequence ID" value="XM_054378400.1"/>
</dbReference>
<dbReference type="RefSeq" id="XP_054234376.1">
    <molecule id="Q9NVI1-1"/>
    <property type="nucleotide sequence ID" value="XM_054378401.1"/>
</dbReference>
<dbReference type="RefSeq" id="XP_054234377.1">
    <molecule id="Q9NVI1-1"/>
    <property type="nucleotide sequence ID" value="XM_054378402.1"/>
</dbReference>
<dbReference type="RefSeq" id="XP_054234378.1">
    <molecule id="Q9NVI1-1"/>
    <property type="nucleotide sequence ID" value="XM_054378403.1"/>
</dbReference>
<dbReference type="RefSeq" id="XP_054234379.1">
    <molecule id="Q9NVI1-1"/>
    <property type="nucleotide sequence ID" value="XM_054378404.1"/>
</dbReference>
<dbReference type="PDB" id="6VAA">
    <property type="method" value="EM"/>
    <property type="resolution" value="3.35 A"/>
    <property type="chains" value="A=1-1328"/>
</dbReference>
<dbReference type="PDB" id="6VAD">
    <property type="method" value="EM"/>
    <property type="resolution" value="3.35 A"/>
    <property type="chains" value="A=1-1328"/>
</dbReference>
<dbReference type="PDB" id="6VAE">
    <property type="method" value="EM"/>
    <property type="resolution" value="3.50 A"/>
    <property type="chains" value="A=1-1328"/>
</dbReference>
<dbReference type="PDB" id="6VAF">
    <property type="method" value="EM"/>
    <property type="resolution" value="3.90 A"/>
    <property type="chains" value="A=1-1328"/>
</dbReference>
<dbReference type="PDB" id="7AY1">
    <property type="method" value="EM"/>
    <property type="resolution" value="3.70 A"/>
    <property type="chains" value="A=1-1328"/>
</dbReference>
<dbReference type="PDB" id="7ZF1">
    <property type="method" value="EM"/>
    <property type="resolution" value="4.14 A"/>
    <property type="chains" value="A=1-1328"/>
</dbReference>
<dbReference type="PDB" id="8A9J">
    <property type="method" value="EM"/>
    <property type="resolution" value="2.80 A"/>
    <property type="chains" value="A=1-1328"/>
</dbReference>
<dbReference type="PDB" id="8A9K">
    <property type="method" value="EM"/>
    <property type="resolution" value="2.85 A"/>
    <property type="chains" value="A=1-1328"/>
</dbReference>
<dbReference type="PDBsum" id="6VAA"/>
<dbReference type="PDBsum" id="6VAD"/>
<dbReference type="PDBsum" id="6VAE"/>
<dbReference type="PDBsum" id="6VAF"/>
<dbReference type="PDBsum" id="7AY1"/>
<dbReference type="PDBsum" id="7ZF1"/>
<dbReference type="PDBsum" id="8A9J"/>
<dbReference type="PDBsum" id="8A9K"/>
<dbReference type="EMDB" id="EMD-11934"/>
<dbReference type="EMDB" id="EMD-14694"/>
<dbReference type="EMDB" id="EMD-14722"/>
<dbReference type="EMDB" id="EMD-15284"/>
<dbReference type="SMR" id="Q9NVI1"/>
<dbReference type="BioGRID" id="120511">
    <property type="interactions" value="267"/>
</dbReference>
<dbReference type="ComplexPortal" id="CPX-6264">
    <property type="entry name" value="Fanconi anemia ID complex"/>
</dbReference>
<dbReference type="CORUM" id="Q9NVI1"/>
<dbReference type="DIP" id="DIP-29381N"/>
<dbReference type="FunCoup" id="Q9NVI1">
    <property type="interactions" value="2359"/>
</dbReference>
<dbReference type="IntAct" id="Q9NVI1">
    <property type="interactions" value="131"/>
</dbReference>
<dbReference type="MINT" id="Q9NVI1"/>
<dbReference type="STRING" id="9606.ENSP00000310842"/>
<dbReference type="GlyGen" id="Q9NVI1">
    <property type="glycosylation" value="1 site, 1 O-linked glycan (1 site)"/>
</dbReference>
<dbReference type="iPTMnet" id="Q9NVI1"/>
<dbReference type="PhosphoSitePlus" id="Q9NVI1"/>
<dbReference type="SwissPalm" id="Q9NVI1"/>
<dbReference type="BioMuta" id="FANCI"/>
<dbReference type="DMDM" id="212276518"/>
<dbReference type="CPTAC" id="CPTAC-3283"/>
<dbReference type="jPOST" id="Q9NVI1"/>
<dbReference type="MassIVE" id="Q9NVI1"/>
<dbReference type="PaxDb" id="9606-ENSP00000310842"/>
<dbReference type="PeptideAtlas" id="Q9NVI1"/>
<dbReference type="ProteomicsDB" id="82811">
    <molecule id="Q9NVI1-3"/>
</dbReference>
<dbReference type="ProteomicsDB" id="82812">
    <molecule id="Q9NVI1-1"/>
</dbReference>
<dbReference type="ProteomicsDB" id="82813">
    <molecule id="Q9NVI1-2"/>
</dbReference>
<dbReference type="ProteomicsDB" id="82814">
    <molecule id="Q9NVI1-4"/>
</dbReference>
<dbReference type="Pumba" id="Q9NVI1"/>
<dbReference type="Antibodypedia" id="15714">
    <property type="antibodies" value="134 antibodies from 25 providers"/>
</dbReference>
<dbReference type="DNASU" id="55215"/>
<dbReference type="Ensembl" id="ENST00000300027.12">
    <molecule id="Q9NVI1-1"/>
    <property type="protein sequence ID" value="ENSP00000300027.8"/>
    <property type="gene ID" value="ENSG00000140525.20"/>
</dbReference>
<dbReference type="Ensembl" id="ENST00000310775.12">
    <molecule id="Q9NVI1-3"/>
    <property type="protein sequence ID" value="ENSP00000310842.8"/>
    <property type="gene ID" value="ENSG00000140525.20"/>
</dbReference>
<dbReference type="Ensembl" id="ENST00000567996.5">
    <molecule id="Q9NVI1-4"/>
    <property type="protein sequence ID" value="ENSP00000458024.1"/>
    <property type="gene ID" value="ENSG00000140525.20"/>
</dbReference>
<dbReference type="Ensembl" id="ENST00000696719.1">
    <molecule id="Q9NVI1-3"/>
    <property type="protein sequence ID" value="ENSP00000512832.1"/>
    <property type="gene ID" value="ENSG00000140525.20"/>
</dbReference>
<dbReference type="GeneID" id="55215"/>
<dbReference type="KEGG" id="hsa:55215"/>
<dbReference type="MANE-Select" id="ENST00000310775.12">
    <property type="protein sequence ID" value="ENSP00000310842.8"/>
    <property type="RefSeq nucleotide sequence ID" value="NM_001113378.2"/>
    <property type="RefSeq protein sequence ID" value="NP_001106849.1"/>
</dbReference>
<dbReference type="UCSC" id="uc002bnm.2">
    <molecule id="Q9NVI1-3"/>
    <property type="organism name" value="human"/>
</dbReference>
<dbReference type="AGR" id="HGNC:25568"/>
<dbReference type="CTD" id="55215"/>
<dbReference type="DisGeNET" id="55215"/>
<dbReference type="GeneCards" id="FANCI"/>
<dbReference type="GeneReviews" id="FANCI"/>
<dbReference type="HGNC" id="HGNC:25568">
    <property type="gene designation" value="FANCI"/>
</dbReference>
<dbReference type="HPA" id="ENSG00000140525">
    <property type="expression patterns" value="Tissue enhanced (bone marrow, lymphoid tissue, testis)"/>
</dbReference>
<dbReference type="MalaCards" id="FANCI"/>
<dbReference type="MIM" id="609053">
    <property type="type" value="phenotype"/>
</dbReference>
<dbReference type="MIM" id="611360">
    <property type="type" value="gene"/>
</dbReference>
<dbReference type="neXtProt" id="NX_Q9NVI1"/>
<dbReference type="OpenTargets" id="ENSG00000140525"/>
<dbReference type="Orphanet" id="84">
    <property type="disease" value="Fanconi anemia"/>
</dbReference>
<dbReference type="PharmGKB" id="PA162387928"/>
<dbReference type="VEuPathDB" id="HostDB:ENSG00000140525"/>
<dbReference type="eggNOG" id="KOG4553">
    <property type="taxonomic scope" value="Eukaryota"/>
</dbReference>
<dbReference type="GeneTree" id="ENSGT00390000005855"/>
<dbReference type="HOGENOM" id="CLU_1102483_0_0_1"/>
<dbReference type="InParanoid" id="Q9NVI1"/>
<dbReference type="OMA" id="QSMRMMN"/>
<dbReference type="OrthoDB" id="195089at2759"/>
<dbReference type="PAN-GO" id="Q9NVI1">
    <property type="GO annotations" value="1 GO annotation based on evolutionary models"/>
</dbReference>
<dbReference type="PhylomeDB" id="Q9NVI1"/>
<dbReference type="TreeFam" id="TF323694"/>
<dbReference type="PathwayCommons" id="Q9NVI1"/>
<dbReference type="Reactome" id="R-HSA-6783310">
    <property type="pathway name" value="Fanconi Anemia Pathway"/>
</dbReference>
<dbReference type="Reactome" id="R-HSA-6796648">
    <property type="pathway name" value="TP53 Regulates Transcription of DNA Repair Genes"/>
</dbReference>
<dbReference type="SignaLink" id="Q9NVI1"/>
<dbReference type="SIGNOR" id="Q9NVI1"/>
<dbReference type="BioGRID-ORCS" id="55215">
    <property type="hits" value="121 hits in 1161 CRISPR screens"/>
</dbReference>
<dbReference type="CD-CODE" id="804901D1">
    <property type="entry name" value="Nuclear speckle"/>
</dbReference>
<dbReference type="CD-CODE" id="91857CE7">
    <property type="entry name" value="Nucleolus"/>
</dbReference>
<dbReference type="ChiTaRS" id="FANCI">
    <property type="organism name" value="human"/>
</dbReference>
<dbReference type="GeneWiki" id="FANCI"/>
<dbReference type="GenomeRNAi" id="55215"/>
<dbReference type="Pharos" id="Q9NVI1">
    <property type="development level" value="Tbio"/>
</dbReference>
<dbReference type="PRO" id="PR:Q9NVI1"/>
<dbReference type="Proteomes" id="UP000005640">
    <property type="component" value="Chromosome 15"/>
</dbReference>
<dbReference type="RNAct" id="Q9NVI1">
    <property type="molecule type" value="protein"/>
</dbReference>
<dbReference type="Bgee" id="ENSG00000140525">
    <property type="expression patterns" value="Expressed in ventricular zone and 137 other cell types or tissues"/>
</dbReference>
<dbReference type="ExpressionAtlas" id="Q9NVI1">
    <property type="expression patterns" value="baseline and differential"/>
</dbReference>
<dbReference type="GO" id="GO:0000785">
    <property type="term" value="C:chromatin"/>
    <property type="evidence" value="ECO:0000303"/>
    <property type="project" value="ComplexPortal"/>
</dbReference>
<dbReference type="GO" id="GO:0005737">
    <property type="term" value="C:cytoplasm"/>
    <property type="evidence" value="ECO:0000314"/>
    <property type="project" value="UniProtKB"/>
</dbReference>
<dbReference type="GO" id="GO:0005829">
    <property type="term" value="C:cytosol"/>
    <property type="evidence" value="ECO:0000314"/>
    <property type="project" value="HPA"/>
</dbReference>
<dbReference type="GO" id="GO:1990391">
    <property type="term" value="C:DNA repair complex"/>
    <property type="evidence" value="ECO:0000353"/>
    <property type="project" value="ComplexPortal"/>
</dbReference>
<dbReference type="GO" id="GO:0016020">
    <property type="term" value="C:membrane"/>
    <property type="evidence" value="ECO:0007005"/>
    <property type="project" value="UniProtKB"/>
</dbReference>
<dbReference type="GO" id="GO:0005654">
    <property type="term" value="C:nucleoplasm"/>
    <property type="evidence" value="ECO:0000314"/>
    <property type="project" value="HPA"/>
</dbReference>
<dbReference type="GO" id="GO:0003677">
    <property type="term" value="F:DNA binding"/>
    <property type="evidence" value="ECO:0007669"/>
    <property type="project" value="UniProtKB-KW"/>
</dbReference>
<dbReference type="GO" id="GO:0070182">
    <property type="term" value="F:DNA polymerase binding"/>
    <property type="evidence" value="ECO:0000353"/>
    <property type="project" value="UniProtKB"/>
</dbReference>
<dbReference type="GO" id="GO:0036297">
    <property type="term" value="P:interstrand cross-link repair"/>
    <property type="evidence" value="ECO:0000303"/>
    <property type="project" value="ComplexPortal"/>
</dbReference>
<dbReference type="GO" id="GO:0031398">
    <property type="term" value="P:positive regulation of protein ubiquitination"/>
    <property type="evidence" value="ECO:0000314"/>
    <property type="project" value="MGI"/>
</dbReference>
<dbReference type="CDD" id="cd11720">
    <property type="entry name" value="FANCI"/>
    <property type="match status" value="1"/>
</dbReference>
<dbReference type="InterPro" id="IPR026171">
    <property type="entry name" value="FANCI"/>
</dbReference>
<dbReference type="InterPro" id="IPR029310">
    <property type="entry name" value="FANCI_HD1"/>
</dbReference>
<dbReference type="InterPro" id="IPR029312">
    <property type="entry name" value="FANCI_HD2"/>
</dbReference>
<dbReference type="InterPro" id="IPR029308">
    <property type="entry name" value="FANCI_S1"/>
</dbReference>
<dbReference type="InterPro" id="IPR029305">
    <property type="entry name" value="FANCI_S1-cap"/>
</dbReference>
<dbReference type="InterPro" id="IPR029315">
    <property type="entry name" value="FANCI_S2"/>
</dbReference>
<dbReference type="InterPro" id="IPR029313">
    <property type="entry name" value="FANCI_S3"/>
</dbReference>
<dbReference type="InterPro" id="IPR029314">
    <property type="entry name" value="FANCI_S4"/>
</dbReference>
<dbReference type="PANTHER" id="PTHR21818">
    <property type="entry name" value="BC025462 PROTEIN"/>
    <property type="match status" value="1"/>
</dbReference>
<dbReference type="PANTHER" id="PTHR21818:SF0">
    <property type="entry name" value="FANCONI ANEMIA GROUP I PROTEIN"/>
    <property type="match status" value="1"/>
</dbReference>
<dbReference type="Pfam" id="PF14679">
    <property type="entry name" value="FANCI_HD1"/>
    <property type="match status" value="1"/>
</dbReference>
<dbReference type="Pfam" id="PF14680">
    <property type="entry name" value="FANCI_HD2"/>
    <property type="match status" value="1"/>
</dbReference>
<dbReference type="Pfam" id="PF14675">
    <property type="entry name" value="FANCI_S1"/>
    <property type="match status" value="1"/>
</dbReference>
<dbReference type="Pfam" id="PF14674">
    <property type="entry name" value="FANCI_S1-cap"/>
    <property type="match status" value="1"/>
</dbReference>
<dbReference type="Pfam" id="PF14676">
    <property type="entry name" value="FANCI_S2"/>
    <property type="match status" value="1"/>
</dbReference>
<dbReference type="Pfam" id="PF14677">
    <property type="entry name" value="FANCI_S3"/>
    <property type="match status" value="1"/>
</dbReference>
<dbReference type="Pfam" id="PF14678">
    <property type="entry name" value="FANCI_S4"/>
    <property type="match status" value="1"/>
</dbReference>
<comment type="function">
    <text evidence="1 7 8 9 11 13 17 18">Plays an essential role in the repair of DNA double-strand breaks by homologous recombination and in the repair of interstrand DNA cross-links (ICLs) by promoting FANCD2 monoubiquitination by FANCL and participating in recruitment to DNA repair sites (PubMed:17412408, PubMed:17460694, PubMed:17452773, PubMed:19111657, PubMed:36385258). The FANCI-FANCD2 complex binds and scans double-stranded DNA (dsDNA) for DNA damage; this complex stalls at DNA junctions between double-stranded DNA and single-stranded DNA (PubMed:19589784). Participates in S phase and G2 phase checkpoint activation upon DNA damage (PubMed:25862789).</text>
</comment>
<comment type="subunit">
    <text evidence="7 9 14 15 16 17 18">Homodimer (PubMed:25862789). Part of a FANCI-FANCD2 heterodimeric complex that binds and scans dsDNA for DNA damage (PubMed:17412408, PubMed:17460694, PubMed:36385258). Interacts with FANCL (PubMed:21775430). Interacts with MTMR15/FAN1 (PubMed:20603015). Interacts with POLN (PubMed:19995904). Interacts with UBL5; the interaction promotes FANCI homodimerization (PubMed:25862789).</text>
</comment>
<comment type="interaction">
    <interactant intactId="EBI-1013291">
        <id>Q9NVI1</id>
    </interactant>
    <interactant intactId="EBI-2807555">
        <id>Q9Y5B0</id>
        <label>CTDP1</label>
    </interactant>
    <organismsDiffer>false</organismsDiffer>
    <experiments>3</experiments>
</comment>
<comment type="interaction">
    <interactant intactId="EBI-1013291">
        <id>Q9NVI1</id>
    </interactant>
    <interactant intactId="EBI-359343">
        <id>Q9BXW9</id>
        <label>FANCD2</label>
    </interactant>
    <organismsDiffer>false</organismsDiffer>
    <experiments>2</experiments>
</comment>
<comment type="subcellular location">
    <subcellularLocation>
        <location evidence="7 9 12">Nucleus</location>
    </subcellularLocation>
    <subcellularLocation>
        <location evidence="10">Cytoplasm</location>
    </subcellularLocation>
    <text>Observed in spots localized in pairs on the sister chromatids of mitotic chromosome arms and not centromeres, one on each chromatids. These foci coincide with common fragile sites. They are frequently interlinked through BLM-associated ultra-fine DNA bridges.</text>
</comment>
<comment type="alternative products">
    <event type="alternative splicing"/>
    <isoform>
        <id>Q9NVI1-3</id>
        <name>3</name>
        <sequence type="displayed"/>
    </isoform>
    <isoform>
        <id>Q9NVI1-2</id>
        <name>2</name>
        <sequence type="described" ref="VSP_026069 VSP_020257"/>
    </isoform>
    <isoform>
        <id>Q9NVI1-1</id>
        <name>1</name>
        <sequence type="described" ref="VSP_026069"/>
    </isoform>
    <isoform>
        <id>Q9NVI1-4</id>
        <name>4</name>
        <sequence type="described" ref="VSP_035606"/>
    </isoform>
</comment>
<comment type="domain">
    <text>The C-terminal 30 residues are probably required for function in DNA repair.</text>
</comment>
<comment type="PTM">
    <text evidence="7 9 13 18">Monoubiquitinated by FANCL on Lys-523 during S phase and upon genotoxic stress (PubMed:17412408, PubMed:17460694, PubMed:19589784, PubMed:36385258). Deubiquitinated by USP1 as cells enter G2/M, or once DNA repair is completed (PubMed:36385258). Monoubiquitination requires the FANCA-FANCB-FANCC-FANCE-FANCF-FANCG-FANCM complex (PubMed:17412408, PubMed:17460694). Ubiquitination is required for binding to chromatin, DNA repair, and normal cell cycle progression (PubMed:36385258). Monoubiquitination is stimulated by DNA-binding (PubMed:36385258).</text>
</comment>
<comment type="PTM">
    <text evidence="1 7">Phosphorylated in response to DNA damage by ATM and/or ATR (PubMed:17412408). Phosphorylation of FANCI promotes ubiquitination of FANCD2, which prevents DNA release from the FANCI-FANCD2 complex (By similarity).</text>
</comment>
<comment type="disease" evidence="7 8 9">
    <disease id="DI-01602">
        <name>Fanconi anemia complementation group I</name>
        <acronym>FANCI</acronym>
        <description>A disorder affecting all bone marrow elements and resulting in anemia, leukopenia and thrombopenia. It is associated with cardiac, renal and limb malformations, dermal pigmentary changes, and a predisposition to the development of malignancies. At the cellular level it is associated with hypersensitivity to DNA-damaging agents, chromosomal instability (increased chromosome breakage) and defective DNA repair.</description>
        <dbReference type="MIM" id="609053"/>
    </disease>
    <text>The disease is caused by variants affecting the gene represented in this entry.</text>
</comment>
<comment type="similarity">
    <text evidence="21">Belongs to the Fanconi anemia group I protein family.</text>
</comment>
<comment type="sequence caution" evidence="21">
    <conflict type="erroneous initiation">
        <sequence resource="EMBL-CDS" id="AAH04277"/>
    </conflict>
    <text>Truncated N-terminus.</text>
</comment>
<comment type="sequence caution" evidence="21">
    <conflict type="erroneous initiation">
        <sequence resource="EMBL-CDS" id="BAA91770"/>
    </conflict>
    <text>Truncated N-terminus.</text>
</comment>
<comment type="sequence caution" evidence="21">
    <conflict type="erroneous initiation">
        <sequence resource="EMBL-CDS" id="BAB55200"/>
    </conflict>
    <text>Truncated N-terminus.</text>
</comment>
<comment type="online information" name="Fanconi Anemia Mutation Database">
    <link uri="https://www2.rockefeller.edu/fanconi/genes/jumpi"/>
</comment>
<keyword id="KW-0002">3D-structure</keyword>
<keyword id="KW-0025">Alternative splicing</keyword>
<keyword id="KW-0131">Cell cycle</keyword>
<keyword id="KW-0963">Cytoplasm</keyword>
<keyword id="KW-0903">Direct protein sequencing</keyword>
<keyword id="KW-0225">Disease variant</keyword>
<keyword id="KW-0227">DNA damage</keyword>
<keyword id="KW-0234">DNA repair</keyword>
<keyword id="KW-0238">DNA-binding</keyword>
<keyword id="KW-0923">Fanconi anemia</keyword>
<keyword id="KW-1017">Isopeptide bond</keyword>
<keyword id="KW-0539">Nucleus</keyword>
<keyword id="KW-0597">Phosphoprotein</keyword>
<keyword id="KW-1267">Proteomics identification</keyword>
<keyword id="KW-1185">Reference proteome</keyword>
<keyword id="KW-0832">Ubl conjugation</keyword>
<proteinExistence type="evidence at protein level"/>
<feature type="chain" id="PRO_0000248376" description="Fanconi anemia group I protein">
    <location>
        <begin position="1"/>
        <end position="1328"/>
    </location>
</feature>
<feature type="region of interest" description="Disordered" evidence="3">
    <location>
        <begin position="1300"/>
        <end position="1328"/>
    </location>
</feature>
<feature type="compositionally biased region" description="Acidic residues" evidence="3">
    <location>
        <begin position="1301"/>
        <end position="1310"/>
    </location>
</feature>
<feature type="modified residue" description="Phosphoserine" evidence="23 24 25">
    <location>
        <position position="407"/>
    </location>
</feature>
<feature type="modified residue" description="Phosphoserine" evidence="2">
    <location>
        <position position="556"/>
    </location>
</feature>
<feature type="modified residue" description="Phosphoserine" evidence="7">
    <location>
        <position position="730"/>
    </location>
</feature>
<feature type="modified residue" description="Phosphothreonine" evidence="7">
    <location>
        <position position="952"/>
    </location>
</feature>
<feature type="modified residue" description="Phosphoserine" evidence="7">
    <location>
        <position position="1121"/>
    </location>
</feature>
<feature type="cross-link" description="Glycyl lysine isopeptide (Lys-Gly) (interchain with G-Cter in ubiquitin)" evidence="7 9 13 18">
    <location>
        <position position="523"/>
    </location>
</feature>
<feature type="splice variant" id="VSP_035606" description="In isoform 4." evidence="20">
    <location>
        <begin position="253"/>
        <end position="1328"/>
    </location>
</feature>
<feature type="splice variant" id="VSP_026069" description="In isoform 1 and isoform 2." evidence="19">
    <location>
        <begin position="819"/>
        <end position="878"/>
    </location>
</feature>
<feature type="splice variant" id="VSP_020257" description="In isoform 2." evidence="19">
    <location>
        <position position="1117"/>
    </location>
</feature>
<feature type="sequence variant" id="VAR_032689" description="In FANCI; benign; no effect on ubiquitination and DNA repair; dbSNP:rs62020347." evidence="7 8">
    <original>P</original>
    <variation>L</variation>
    <location>
        <position position="55"/>
    </location>
</feature>
<feature type="sequence variant" id="VAR_032690" description="In dbSNP:rs17803620." evidence="6">
    <original>A</original>
    <variation>V</variation>
    <location>
        <position position="86"/>
    </location>
</feature>
<feature type="sequence variant" id="VAR_027278" description="In dbSNP:rs28378332.">
    <original>Q</original>
    <variation>K</variation>
    <location>
        <position position="686"/>
    </location>
</feature>
<feature type="sequence variant" id="VAR_027279" description="In dbSNP:rs2283432." evidence="4 5">
    <original>C</original>
    <variation>S</variation>
    <location>
        <position position="742"/>
    </location>
</feature>
<feature type="sequence variant" id="VAR_032691" description="In FANCI." evidence="9">
    <original>H</original>
    <variation>Y</variation>
    <location>
        <position position="858"/>
    </location>
</feature>
<feature type="sequence variant" id="VAR_032692" description="In FANCI; abolishes function in DNA repair; dbSNP:rs121918163." evidence="7 8">
    <original>R</original>
    <variation>Q</variation>
    <location>
        <position position="1285"/>
    </location>
</feature>
<feature type="mutagenesis site" description="Abolishes monoubiquitination by FANCL and UBE2T." evidence="13">
    <original>K</original>
    <variation>R</variation>
    <location>
        <position position="523"/>
    </location>
</feature>
<feature type="sequence conflict" description="In Ref. 6; BAB47423." evidence="21" ref="6">
    <original>N</original>
    <variation>S</variation>
    <location>
        <position position="528"/>
    </location>
</feature>
<feature type="sequence conflict" description="In Ref. 5; BAA91770." evidence="21" ref="5">
    <original>M</original>
    <variation>T</variation>
    <location>
        <position position="604"/>
    </location>
</feature>
<feature type="sequence conflict" description="In Ref. 6; BAB47423." evidence="21" ref="6">
    <original>I</original>
    <variation>L</variation>
    <location>
        <position position="877"/>
    </location>
</feature>
<feature type="helix" evidence="27">
    <location>
        <begin position="3"/>
        <end position="11"/>
    </location>
</feature>
<feature type="strand" evidence="27">
    <location>
        <begin position="13"/>
        <end position="16"/>
    </location>
</feature>
<feature type="helix" evidence="27">
    <location>
        <begin position="17"/>
        <end position="21"/>
    </location>
</feature>
<feature type="helix" evidence="27">
    <location>
        <begin position="29"/>
        <end position="38"/>
    </location>
</feature>
<feature type="helix" evidence="27">
    <location>
        <begin position="40"/>
        <end position="53"/>
    </location>
</feature>
<feature type="strand" evidence="27">
    <location>
        <begin position="56"/>
        <end position="59"/>
    </location>
</feature>
<feature type="helix" evidence="27">
    <location>
        <begin position="60"/>
        <end position="77"/>
    </location>
</feature>
<feature type="helix" evidence="27">
    <location>
        <begin position="83"/>
        <end position="96"/>
    </location>
</feature>
<feature type="helix" evidence="27">
    <location>
        <begin position="102"/>
        <end position="117"/>
    </location>
</feature>
<feature type="helix" evidence="27">
    <location>
        <begin position="125"/>
        <end position="128"/>
    </location>
</feature>
<feature type="helix" evidence="27">
    <location>
        <begin position="129"/>
        <end position="139"/>
    </location>
</feature>
<feature type="helix" evidence="27">
    <location>
        <begin position="153"/>
        <end position="166"/>
    </location>
</feature>
<feature type="helix" evidence="26">
    <location>
        <begin position="171"/>
        <end position="173"/>
    </location>
</feature>
<feature type="helix" evidence="27">
    <location>
        <begin position="175"/>
        <end position="180"/>
    </location>
</feature>
<feature type="helix" evidence="28">
    <location>
        <begin position="189"/>
        <end position="202"/>
    </location>
</feature>
<feature type="helix" evidence="28">
    <location>
        <begin position="207"/>
        <end position="209"/>
    </location>
</feature>
<feature type="helix" evidence="28">
    <location>
        <begin position="210"/>
        <end position="220"/>
    </location>
</feature>
<feature type="helix" evidence="28">
    <location>
        <begin position="221"/>
        <end position="223"/>
    </location>
</feature>
<feature type="helix" evidence="28">
    <location>
        <begin position="227"/>
        <end position="248"/>
    </location>
</feature>
<feature type="strand" evidence="28">
    <location>
        <begin position="252"/>
        <end position="255"/>
    </location>
</feature>
<feature type="helix" evidence="28">
    <location>
        <begin position="261"/>
        <end position="282"/>
    </location>
</feature>
<feature type="helix" evidence="28">
    <location>
        <begin position="284"/>
        <end position="292"/>
    </location>
</feature>
<feature type="strand" evidence="27">
    <location>
        <begin position="297"/>
        <end position="299"/>
    </location>
</feature>
<feature type="helix" evidence="28">
    <location>
        <begin position="307"/>
        <end position="316"/>
    </location>
</feature>
<feature type="helix" evidence="28">
    <location>
        <begin position="320"/>
        <end position="322"/>
    </location>
</feature>
<feature type="helix" evidence="28">
    <location>
        <begin position="323"/>
        <end position="345"/>
    </location>
</feature>
<feature type="helix" evidence="28">
    <location>
        <begin position="349"/>
        <end position="353"/>
    </location>
</feature>
<feature type="helix" evidence="28">
    <location>
        <begin position="360"/>
        <end position="370"/>
    </location>
</feature>
<feature type="turn" evidence="28">
    <location>
        <begin position="371"/>
        <end position="374"/>
    </location>
</feature>
<feature type="helix" evidence="28">
    <location>
        <begin position="376"/>
        <end position="392"/>
    </location>
</feature>
<feature type="helix" evidence="28">
    <location>
        <begin position="412"/>
        <end position="432"/>
    </location>
</feature>
<feature type="strand" evidence="28">
    <location>
        <begin position="434"/>
        <end position="436"/>
    </location>
</feature>
<feature type="helix" evidence="28">
    <location>
        <begin position="437"/>
        <end position="448"/>
    </location>
</feature>
<feature type="helix" evidence="28">
    <location>
        <begin position="457"/>
        <end position="466"/>
    </location>
</feature>
<feature type="helix" evidence="28">
    <location>
        <begin position="470"/>
        <end position="476"/>
    </location>
</feature>
<feature type="helix" evidence="28">
    <location>
        <begin position="479"/>
        <end position="486"/>
    </location>
</feature>
<feature type="turn" evidence="28">
    <location>
        <begin position="487"/>
        <end position="490"/>
    </location>
</feature>
<feature type="helix" evidence="28">
    <location>
        <begin position="493"/>
        <end position="502"/>
    </location>
</feature>
<feature type="helix" evidence="28">
    <location>
        <begin position="504"/>
        <end position="509"/>
    </location>
</feature>
<feature type="helix" evidence="28">
    <location>
        <begin position="511"/>
        <end position="526"/>
    </location>
</feature>
<feature type="turn" evidence="28">
    <location>
        <begin position="530"/>
        <end position="532"/>
    </location>
</feature>
<feature type="helix" evidence="28">
    <location>
        <begin position="533"/>
        <end position="544"/>
    </location>
</feature>
<feature type="strand" evidence="28">
    <location>
        <begin position="566"/>
        <end position="568"/>
    </location>
</feature>
<feature type="helix" evidence="28">
    <location>
        <begin position="577"/>
        <end position="592"/>
    </location>
</feature>
<feature type="helix" evidence="28">
    <location>
        <begin position="593"/>
        <end position="596"/>
    </location>
</feature>
<feature type="helix" evidence="28">
    <location>
        <begin position="599"/>
        <end position="615"/>
    </location>
</feature>
<feature type="helix" evidence="28">
    <location>
        <begin position="617"/>
        <end position="619"/>
    </location>
</feature>
<feature type="helix" evidence="28">
    <location>
        <begin position="620"/>
        <end position="632"/>
    </location>
</feature>
<feature type="strand" evidence="27">
    <location>
        <begin position="638"/>
        <end position="640"/>
    </location>
</feature>
<feature type="strand" evidence="28">
    <location>
        <begin position="642"/>
        <end position="645"/>
    </location>
</feature>
<feature type="helix" evidence="28">
    <location>
        <begin position="647"/>
        <end position="650"/>
    </location>
</feature>
<feature type="strand" evidence="28">
    <location>
        <begin position="651"/>
        <end position="653"/>
    </location>
</feature>
<feature type="strand" evidence="28">
    <location>
        <begin position="658"/>
        <end position="660"/>
    </location>
</feature>
<feature type="helix" evidence="28">
    <location>
        <begin position="664"/>
        <end position="681"/>
    </location>
</feature>
<feature type="helix" evidence="28">
    <location>
        <begin position="699"/>
        <end position="715"/>
    </location>
</feature>
<feature type="turn" evidence="29">
    <location>
        <begin position="719"/>
        <end position="722"/>
    </location>
</feature>
<feature type="turn" evidence="27">
    <location>
        <begin position="724"/>
        <end position="726"/>
    </location>
</feature>
<feature type="strand" evidence="28">
    <location>
        <begin position="731"/>
        <end position="733"/>
    </location>
</feature>
<feature type="helix" evidence="28">
    <location>
        <begin position="734"/>
        <end position="759"/>
    </location>
</feature>
<feature type="strand" evidence="27">
    <location>
        <begin position="761"/>
        <end position="763"/>
    </location>
</feature>
<feature type="helix" evidence="28">
    <location>
        <begin position="765"/>
        <end position="788"/>
    </location>
</feature>
<feature type="turn" evidence="26">
    <location>
        <begin position="789"/>
        <end position="791"/>
    </location>
</feature>
<feature type="strand" evidence="27">
    <location>
        <begin position="798"/>
        <end position="801"/>
    </location>
</feature>
<feature type="helix" evidence="28">
    <location>
        <begin position="807"/>
        <end position="819"/>
    </location>
</feature>
<feature type="helix" evidence="28">
    <location>
        <begin position="823"/>
        <end position="834"/>
    </location>
</feature>
<feature type="helix" evidence="28">
    <location>
        <begin position="836"/>
        <end position="856"/>
    </location>
</feature>
<feature type="turn" evidence="28">
    <location>
        <begin position="862"/>
        <end position="865"/>
    </location>
</feature>
<feature type="helix" evidence="28">
    <location>
        <begin position="867"/>
        <end position="887"/>
    </location>
</feature>
<feature type="helix" evidence="27">
    <location>
        <begin position="897"/>
        <end position="900"/>
    </location>
</feature>
<feature type="helix" evidence="28">
    <location>
        <begin position="904"/>
        <end position="922"/>
    </location>
</feature>
<feature type="helix" evidence="27">
    <location>
        <begin position="924"/>
        <end position="926"/>
    </location>
</feature>
<feature type="helix" evidence="28">
    <location>
        <begin position="927"/>
        <end position="932"/>
    </location>
</feature>
<feature type="helix" evidence="28">
    <location>
        <begin position="951"/>
        <end position="971"/>
    </location>
</feature>
<feature type="turn" evidence="28">
    <location>
        <begin position="974"/>
        <end position="976"/>
    </location>
</feature>
<feature type="helix" evidence="28">
    <location>
        <begin position="979"/>
        <end position="993"/>
    </location>
</feature>
<feature type="strand" evidence="28">
    <location>
        <begin position="998"/>
        <end position="1000"/>
    </location>
</feature>
<feature type="helix" evidence="28">
    <location>
        <begin position="1001"/>
        <end position="1016"/>
    </location>
</feature>
<feature type="helix" evidence="28">
    <location>
        <begin position="1022"/>
        <end position="1037"/>
    </location>
</feature>
<feature type="helix" evidence="28">
    <location>
        <begin position="1043"/>
        <end position="1057"/>
    </location>
</feature>
<feature type="strand" evidence="28">
    <location>
        <begin position="1062"/>
        <end position="1064"/>
    </location>
</feature>
<feature type="turn" evidence="28">
    <location>
        <begin position="1077"/>
        <end position="1083"/>
    </location>
</feature>
<feature type="helix" evidence="28">
    <location>
        <begin position="1084"/>
        <end position="1109"/>
    </location>
</feature>
<feature type="helix" evidence="28">
    <location>
        <begin position="1127"/>
        <end position="1148"/>
    </location>
</feature>
<feature type="helix" evidence="28">
    <location>
        <begin position="1157"/>
        <end position="1183"/>
    </location>
</feature>
<feature type="turn" evidence="27">
    <location>
        <begin position="1184"/>
        <end position="1186"/>
    </location>
</feature>
<feature type="helix" evidence="28">
    <location>
        <begin position="1192"/>
        <end position="1204"/>
    </location>
</feature>
<feature type="helix" evidence="28">
    <location>
        <begin position="1206"/>
        <end position="1218"/>
    </location>
</feature>
<feature type="helix" evidence="28">
    <location>
        <begin position="1237"/>
        <end position="1246"/>
    </location>
</feature>
<feature type="helix" evidence="28">
    <location>
        <begin position="1249"/>
        <end position="1270"/>
    </location>
</feature>
<feature type="strand" evidence="28">
    <location>
        <begin position="1271"/>
        <end position="1273"/>
    </location>
</feature>
<feature type="helix" evidence="28">
    <location>
        <begin position="1275"/>
        <end position="1277"/>
    </location>
</feature>
<feature type="strand" evidence="28">
    <location>
        <begin position="1285"/>
        <end position="1287"/>
    </location>
</feature>
<gene>
    <name type="primary">FANCI</name>
    <name type="synonym">KIAA1794</name>
</gene>
<name>FANCI_HUMAN</name>